<feature type="chain" id="PRO_0000192359" description="Uncharacterized protein aq_2135">
    <location>
        <begin position="1"/>
        <end position="211"/>
    </location>
</feature>
<feature type="binding site" evidence="1">
    <location>
        <position position="54"/>
    </location>
    <ligand>
        <name>Zn(2+)</name>
        <dbReference type="ChEBI" id="CHEBI:29105"/>
        <label>1</label>
    </ligand>
</feature>
<feature type="binding site" evidence="1">
    <location>
        <position position="56"/>
    </location>
    <ligand>
        <name>Zn(2+)</name>
        <dbReference type="ChEBI" id="CHEBI:29105"/>
        <label>1</label>
    </ligand>
</feature>
<feature type="binding site" evidence="1">
    <location>
        <position position="58"/>
    </location>
    <ligand>
        <name>Zn(2+)</name>
        <dbReference type="ChEBI" id="CHEBI:29105"/>
        <label>2</label>
    </ligand>
</feature>
<feature type="binding site" evidence="1">
    <location>
        <position position="59"/>
    </location>
    <ligand>
        <name>Zn(2+)</name>
        <dbReference type="ChEBI" id="CHEBI:29105"/>
        <label>2</label>
    </ligand>
</feature>
<feature type="binding site" evidence="1">
    <location>
        <position position="129"/>
    </location>
    <ligand>
        <name>Zn(2+)</name>
        <dbReference type="ChEBI" id="CHEBI:29105"/>
        <label>1</label>
    </ligand>
</feature>
<feature type="binding site" evidence="1">
    <location>
        <position position="148"/>
    </location>
    <ligand>
        <name>Zn(2+)</name>
        <dbReference type="ChEBI" id="CHEBI:29105"/>
        <label>1</label>
    </ligand>
</feature>
<feature type="binding site" evidence="1">
    <location>
        <position position="148"/>
    </location>
    <ligand>
        <name>Zn(2+)</name>
        <dbReference type="ChEBI" id="CHEBI:29105"/>
        <label>2</label>
    </ligand>
</feature>
<feature type="binding site" evidence="1">
    <location>
        <position position="189"/>
    </location>
    <ligand>
        <name>Zn(2+)</name>
        <dbReference type="ChEBI" id="CHEBI:29105"/>
        <label>2</label>
    </ligand>
</feature>
<keyword id="KW-0378">Hydrolase</keyword>
<keyword id="KW-0479">Metal-binding</keyword>
<keyword id="KW-1185">Reference proteome</keyword>
<keyword id="KW-0862">Zinc</keyword>
<dbReference type="EC" id="3.-.-.-"/>
<dbReference type="EMBL" id="AE000657">
    <property type="protein sequence ID" value="AAC07862.1"/>
    <property type="molecule type" value="Genomic_DNA"/>
</dbReference>
<dbReference type="PIR" id="A70483">
    <property type="entry name" value="A70483"/>
</dbReference>
<dbReference type="RefSeq" id="NP_214462.1">
    <property type="nucleotide sequence ID" value="NC_000918.1"/>
</dbReference>
<dbReference type="RefSeq" id="WP_010881398.1">
    <property type="nucleotide sequence ID" value="NC_000918.1"/>
</dbReference>
<dbReference type="SMR" id="O67893"/>
<dbReference type="FunCoup" id="O67893">
    <property type="interactions" value="386"/>
</dbReference>
<dbReference type="STRING" id="224324.aq_2135"/>
<dbReference type="EnsemblBacteria" id="AAC07862">
    <property type="protein sequence ID" value="AAC07862"/>
    <property type="gene ID" value="aq_2135"/>
</dbReference>
<dbReference type="KEGG" id="aae:aq_2135"/>
<dbReference type="eggNOG" id="COG0491">
    <property type="taxonomic scope" value="Bacteria"/>
</dbReference>
<dbReference type="HOGENOM" id="CLU_030571_5_3_0"/>
<dbReference type="InParanoid" id="O67893"/>
<dbReference type="OrthoDB" id="9802248at2"/>
<dbReference type="Proteomes" id="UP000000798">
    <property type="component" value="Chromosome"/>
</dbReference>
<dbReference type="GO" id="GO:0016787">
    <property type="term" value="F:hydrolase activity"/>
    <property type="evidence" value="ECO:0007669"/>
    <property type="project" value="UniProtKB-KW"/>
</dbReference>
<dbReference type="GO" id="GO:0046872">
    <property type="term" value="F:metal ion binding"/>
    <property type="evidence" value="ECO:0007669"/>
    <property type="project" value="UniProtKB-KW"/>
</dbReference>
<dbReference type="CDD" id="cd06262">
    <property type="entry name" value="metallo-hydrolase-like_MBL-fold"/>
    <property type="match status" value="1"/>
</dbReference>
<dbReference type="Gene3D" id="3.60.15.10">
    <property type="entry name" value="Ribonuclease Z/Hydroxyacylglutathione hydrolase-like"/>
    <property type="match status" value="1"/>
</dbReference>
<dbReference type="InterPro" id="IPR051453">
    <property type="entry name" value="MBL_Glyoxalase_II"/>
</dbReference>
<dbReference type="InterPro" id="IPR001279">
    <property type="entry name" value="Metallo-B-lactamas"/>
</dbReference>
<dbReference type="InterPro" id="IPR036866">
    <property type="entry name" value="RibonucZ/Hydroxyglut_hydro"/>
</dbReference>
<dbReference type="PANTHER" id="PTHR46233">
    <property type="entry name" value="HYDROXYACYLGLUTATHIONE HYDROLASE GLOC"/>
    <property type="match status" value="1"/>
</dbReference>
<dbReference type="PANTHER" id="PTHR46233:SF3">
    <property type="entry name" value="HYDROXYACYLGLUTATHIONE HYDROLASE GLOC"/>
    <property type="match status" value="1"/>
</dbReference>
<dbReference type="Pfam" id="PF00753">
    <property type="entry name" value="Lactamase_B"/>
    <property type="match status" value="1"/>
</dbReference>
<dbReference type="SMART" id="SM00849">
    <property type="entry name" value="Lactamase_B"/>
    <property type="match status" value="1"/>
</dbReference>
<dbReference type="SUPFAM" id="SSF56281">
    <property type="entry name" value="Metallo-hydrolase/oxidoreductase"/>
    <property type="match status" value="1"/>
</dbReference>
<name>Y2135_AQUAE</name>
<proteinExistence type="inferred from homology"/>
<comment type="cofactor">
    <cofactor evidence="1">
        <name>Zn(2+)</name>
        <dbReference type="ChEBI" id="CHEBI:29105"/>
    </cofactor>
    <text evidence="1">Binds 2 Zn(2+) ions per subunit.</text>
</comment>
<comment type="similarity">
    <text evidence="2">Belongs to the metallo-beta-lactamase superfamily. Glyoxalase II family.</text>
</comment>
<reference key="1">
    <citation type="journal article" date="1998" name="Nature">
        <title>The complete genome of the hyperthermophilic bacterium Aquifex aeolicus.</title>
        <authorList>
            <person name="Deckert G."/>
            <person name="Warren P.V."/>
            <person name="Gaasterland T."/>
            <person name="Young W.G."/>
            <person name="Lenox A.L."/>
            <person name="Graham D.E."/>
            <person name="Overbeek R."/>
            <person name="Snead M.A."/>
            <person name="Keller M."/>
            <person name="Aujay M."/>
            <person name="Huber R."/>
            <person name="Feldman R.A."/>
            <person name="Short J.M."/>
            <person name="Olsen G.J."/>
            <person name="Swanson R.V."/>
        </authorList>
    </citation>
    <scope>NUCLEOTIDE SEQUENCE [LARGE SCALE GENOMIC DNA]</scope>
    <source>
        <strain>VF5</strain>
    </source>
</reference>
<organism>
    <name type="scientific">Aquifex aeolicus (strain VF5)</name>
    <dbReference type="NCBI Taxonomy" id="224324"/>
    <lineage>
        <taxon>Bacteria</taxon>
        <taxon>Pseudomonadati</taxon>
        <taxon>Aquificota</taxon>
        <taxon>Aquificia</taxon>
        <taxon>Aquificales</taxon>
        <taxon>Aquificaceae</taxon>
        <taxon>Aquifex</taxon>
    </lineage>
</organism>
<protein>
    <recommendedName>
        <fullName>Uncharacterized protein aq_2135</fullName>
        <ecNumber>3.-.-.-</ecNumber>
    </recommendedName>
</protein>
<sequence>MIIKVIPVGPIAVNCSVVADEKSGEAIIIDPGAEAEKILEAVKDFKVVGIVATHGHIDHVGQVGKLKELFDVPFYMNPLDKFLINDEIWSGFASYIGAVPCPEPDVEISEGDVIRVGDVEFKVLHTPGHTPGLCCLYEEKRRVLIAGDLLFKGSVGRWDLPGGNLVELKKSVKRVLTELPQDTLVICGHYDETTIGQERAFNPFAGELLNG</sequence>
<gene>
    <name type="ordered locus">aq_2135</name>
</gene>
<accession>O67893</accession>
<evidence type="ECO:0000250" key="1">
    <source>
        <dbReference type="UniProtKB" id="Q16775"/>
    </source>
</evidence>
<evidence type="ECO:0000305" key="2"/>